<sequence>MDATLDRFFPLFESESNEDFWRIEEIRRYHESLMVELDRIYRIAEAARKKGLDPELSVEIPIAKNMAERVEKLMNLQGLAKRIMELEEGGLSRELICFKVADEIVEGKFGEMPKEEAIDKAVRTAVAIMTEGVVAAPIEGIARVRIDRENFLRVYYAGPIRSAGGTAQVISVLVADYVRRKAEIGRYVPTEEEILRYCEEIPLYKKVANLQYLPSDEEIRLIVSNCPICIDGEPTESAEVSGYRNLPRVETNRVRGGMALVIAEGIALKAPKLKKMVDEVGIEGWEWLDALIKGGGDSGSEEEKAVIKPKDKYLSDIVAGRPVLSHPSRKGGFRLRYGRARNSGFATVGVNPATMYLLEFVAVGTQLKVERPGKAGGVVPVSTIEGPTVRLKNGDVVKINTLSEAKALKGEVAAILDLGEILINYGDFLENNHPLIPASYTYEWWIQEAEKAGLRGDYRKISEEEALKLCDEFHVPLHPDYTYLWHDISVEDYRYLRNFVSDNGKIEGKHGKSVLLLPYDSRVKEILEALLLEHKVRESFIVIETWRAFIRCLGLDEKLSKVSEVSGKDVLEIVNGISGIKVRPKALSRIGARMGRPEKAKERKMSPPPHILFPVGMAGGNTRDIKNAINYTKSYNAKKGEIEVEIAIRKCPQCGKETFWLKCDVCGELTEQLYYCPSCRMKNTSSVCESCGRECEGYMKRKVDLRELYEEAIANLGEYDSFDTIKGVKGMTSKTKIPERLEKGILRVKHGVFVFKDGTARFDATDLPITHFKPAEIGVSVEKLRELGYERDYKGAELKNENQIVELKPQDVILPKSGAEYLLRVANFIDDLLVKFYKMEPFYNAKSVEDLIGHLVIGLAPHTSAGVLGRIIGFSDVLAGYAHPYFHAAKRRNCDGDEDCFMLLLDGLLNFSRKFLPDKRGGQMDAPLVLTAIVDPREVDKEVHNMDIVERYPLEFYEATMRFASPKEMEDYVEKVKDRLKDESRFCGLFFTHDTENIAAGVKESAYKSLKTMQDKVYRQMELARMIVAVDEHDVAERVINVHFLPDIIGNLRAFSRQEFRCTRCNTKYRRIPLVGKCLKCGNKLTLTVHSSSIMKYLELSKFLCENFNVSSYTKQRLMLLEQEIKSMFENGTEKQVSISDFV</sequence>
<comment type="function">
    <text evidence="1">Possesses two activities: a DNA synthesis (polymerase) and an exonucleolytic activity that degrades single-stranded DNA in the 3'- to 5'-direction. Has a template-primer preference which is characteristic of a replicative DNA polymerase (By similarity).</text>
</comment>
<comment type="catalytic activity">
    <reaction>
        <text>DNA(n) + a 2'-deoxyribonucleoside 5'-triphosphate = DNA(n+1) + diphosphate</text>
        <dbReference type="Rhea" id="RHEA:22508"/>
        <dbReference type="Rhea" id="RHEA-COMP:17339"/>
        <dbReference type="Rhea" id="RHEA-COMP:17340"/>
        <dbReference type="ChEBI" id="CHEBI:33019"/>
        <dbReference type="ChEBI" id="CHEBI:61560"/>
        <dbReference type="ChEBI" id="CHEBI:173112"/>
        <dbReference type="EC" id="2.7.7.7"/>
    </reaction>
</comment>
<comment type="catalytic activity">
    <reaction evidence="2">
        <text>Exonucleolytic cleavage in the 3'- to 5'-direction to yield nucleoside 5'-phosphates.</text>
        <dbReference type="EC" id="3.1.11.1"/>
    </reaction>
</comment>
<comment type="subunit">
    <text evidence="1">Heterodimer of a large subunit and a small subunit.</text>
</comment>
<comment type="similarity">
    <text evidence="3">Belongs to the archaeal DNA polymerase II family.</text>
</comment>
<keyword id="KW-0235">DNA replication</keyword>
<keyword id="KW-0238">DNA-binding</keyword>
<keyword id="KW-0239">DNA-directed DNA polymerase</keyword>
<keyword id="KW-0269">Exonuclease</keyword>
<keyword id="KW-0378">Hydrolase</keyword>
<keyword id="KW-0511">Multifunctional enzyme</keyword>
<keyword id="KW-0540">Nuclease</keyword>
<keyword id="KW-0548">Nucleotidyltransferase</keyword>
<keyword id="KW-1185">Reference proteome</keyword>
<keyword id="KW-0808">Transferase</keyword>
<proteinExistence type="inferred from homology"/>
<name>DP2L_ARCFU</name>
<organism>
    <name type="scientific">Archaeoglobus fulgidus (strain ATCC 49558 / DSM 4304 / JCM 9628 / NBRC 100126 / VC-16)</name>
    <dbReference type="NCBI Taxonomy" id="224325"/>
    <lineage>
        <taxon>Archaea</taxon>
        <taxon>Methanobacteriati</taxon>
        <taxon>Methanobacteriota</taxon>
        <taxon>Archaeoglobi</taxon>
        <taxon>Archaeoglobales</taxon>
        <taxon>Archaeoglobaceae</taxon>
        <taxon>Archaeoglobus</taxon>
    </lineage>
</organism>
<reference key="1">
    <citation type="journal article" date="1997" name="Nature">
        <title>The complete genome sequence of the hyperthermophilic, sulphate-reducing archaeon Archaeoglobus fulgidus.</title>
        <authorList>
            <person name="Klenk H.-P."/>
            <person name="Clayton R.A."/>
            <person name="Tomb J.-F."/>
            <person name="White O."/>
            <person name="Nelson K.E."/>
            <person name="Ketchum K.A."/>
            <person name="Dodson R.J."/>
            <person name="Gwinn M.L."/>
            <person name="Hickey E.K."/>
            <person name="Peterson J.D."/>
            <person name="Richardson D.L."/>
            <person name="Kerlavage A.R."/>
            <person name="Graham D.E."/>
            <person name="Kyrpides N.C."/>
            <person name="Fleischmann R.D."/>
            <person name="Quackenbush J."/>
            <person name="Lee N.H."/>
            <person name="Sutton G.G."/>
            <person name="Gill S.R."/>
            <person name="Kirkness E.F."/>
            <person name="Dougherty B.A."/>
            <person name="McKenney K."/>
            <person name="Adams M.D."/>
            <person name="Loftus B.J."/>
            <person name="Peterson S.N."/>
            <person name="Reich C.I."/>
            <person name="McNeil L.K."/>
            <person name="Badger J.H."/>
            <person name="Glodek A."/>
            <person name="Zhou L."/>
            <person name="Overbeek R."/>
            <person name="Gocayne J.D."/>
            <person name="Weidman J.F."/>
            <person name="McDonald L.A."/>
            <person name="Utterback T.R."/>
            <person name="Cotton M.D."/>
            <person name="Spriggs T."/>
            <person name="Artiach P."/>
            <person name="Kaine B.P."/>
            <person name="Sykes S.M."/>
            <person name="Sadow P.W."/>
            <person name="D'Andrea K.P."/>
            <person name="Bowman C."/>
            <person name="Fujii C."/>
            <person name="Garland S.A."/>
            <person name="Mason T.M."/>
            <person name="Olsen G.J."/>
            <person name="Fraser C.M."/>
            <person name="Smith H.O."/>
            <person name="Woese C.R."/>
            <person name="Venter J.C."/>
        </authorList>
    </citation>
    <scope>NUCLEOTIDE SEQUENCE [LARGE SCALE GENOMIC DNA]</scope>
    <source>
        <strain>ATCC 49558 / DSM 4304 / JCM 9628 / NBRC 100126 / VC-16</strain>
    </source>
</reference>
<gene>
    <name type="primary">polC</name>
    <name type="ordered locus">AF_1722</name>
</gene>
<protein>
    <recommendedName>
        <fullName>DNA polymerase II large subunit</fullName>
        <shortName>Pol II</shortName>
        <ecNumber evidence="2">2.7.7.7</ecNumber>
    </recommendedName>
    <alternativeName>
        <fullName evidence="2">Exodeoxyribonuclease large subunit</fullName>
        <ecNumber evidence="2">3.1.11.1</ecNumber>
    </alternativeName>
</protein>
<feature type="chain" id="PRO_0000152573" description="DNA polymerase II large subunit">
    <location>
        <begin position="1"/>
        <end position="1143"/>
    </location>
</feature>
<evidence type="ECO:0000250" key="1"/>
<evidence type="ECO:0000255" key="2">
    <source>
        <dbReference type="HAMAP-Rule" id="MF_00324"/>
    </source>
</evidence>
<evidence type="ECO:0000305" key="3"/>
<accession>O28552</accession>
<dbReference type="EC" id="2.7.7.7" evidence="2"/>
<dbReference type="EC" id="3.1.11.1" evidence="2"/>
<dbReference type="EMBL" id="AE000782">
    <property type="protein sequence ID" value="AAB89529.1"/>
    <property type="molecule type" value="Genomic_DNA"/>
</dbReference>
<dbReference type="PIR" id="A69465">
    <property type="entry name" value="A69465"/>
</dbReference>
<dbReference type="SMR" id="O28552"/>
<dbReference type="STRING" id="224325.AF_1722"/>
<dbReference type="PaxDb" id="224325-AF_1722"/>
<dbReference type="EnsemblBacteria" id="AAB89529">
    <property type="protein sequence ID" value="AAB89529"/>
    <property type="gene ID" value="AF_1722"/>
</dbReference>
<dbReference type="KEGG" id="afu:AF_1722"/>
<dbReference type="eggNOG" id="arCOG04447">
    <property type="taxonomic scope" value="Archaea"/>
</dbReference>
<dbReference type="HOGENOM" id="CLU_001154_0_0_2"/>
<dbReference type="OrthoDB" id="7529at2157"/>
<dbReference type="PhylomeDB" id="O28552"/>
<dbReference type="Proteomes" id="UP000002199">
    <property type="component" value="Chromosome"/>
</dbReference>
<dbReference type="GO" id="GO:0003677">
    <property type="term" value="F:DNA binding"/>
    <property type="evidence" value="ECO:0007669"/>
    <property type="project" value="UniProtKB-UniRule"/>
</dbReference>
<dbReference type="GO" id="GO:0003887">
    <property type="term" value="F:DNA-directed DNA polymerase activity"/>
    <property type="evidence" value="ECO:0007669"/>
    <property type="project" value="UniProtKB-UniRule"/>
</dbReference>
<dbReference type="GO" id="GO:0008310">
    <property type="term" value="F:single-stranded DNA 3'-5' DNA exonuclease activity"/>
    <property type="evidence" value="ECO:0007669"/>
    <property type="project" value="UniProtKB-EC"/>
</dbReference>
<dbReference type="GO" id="GO:0006308">
    <property type="term" value="P:DNA catabolic process"/>
    <property type="evidence" value="ECO:0007669"/>
    <property type="project" value="UniProtKB-UniRule"/>
</dbReference>
<dbReference type="GO" id="GO:0006261">
    <property type="term" value="P:DNA-templated DNA replication"/>
    <property type="evidence" value="ECO:0007669"/>
    <property type="project" value="UniProtKB-UniRule"/>
</dbReference>
<dbReference type="HAMAP" id="MF_00324">
    <property type="entry name" value="DNApol_II_L_arch"/>
    <property type="match status" value="1"/>
</dbReference>
<dbReference type="InterPro" id="IPR004475">
    <property type="entry name" value="PolC_DP2"/>
</dbReference>
<dbReference type="InterPro" id="IPR056172">
    <property type="entry name" value="PolC_DP2_cat_dom"/>
</dbReference>
<dbReference type="InterPro" id="IPR056171">
    <property type="entry name" value="PolC_DP2_central_dom"/>
</dbReference>
<dbReference type="InterPro" id="IPR016033">
    <property type="entry name" value="PolC_DP2_N"/>
</dbReference>
<dbReference type="NCBIfam" id="TIGR00354">
    <property type="entry name" value="polC"/>
    <property type="match status" value="1"/>
</dbReference>
<dbReference type="NCBIfam" id="NF003103">
    <property type="entry name" value="PRK04023.1"/>
    <property type="match status" value="1"/>
</dbReference>
<dbReference type="PANTHER" id="PTHR42210">
    <property type="entry name" value="DNA POLYMERASE II LARGE SUBUNIT"/>
    <property type="match status" value="1"/>
</dbReference>
<dbReference type="PANTHER" id="PTHR42210:SF1">
    <property type="entry name" value="DNA POLYMERASE II LARGE SUBUNIT"/>
    <property type="match status" value="1"/>
</dbReference>
<dbReference type="Pfam" id="PF24846">
    <property type="entry name" value="PolC_DP2_cat"/>
    <property type="match status" value="1"/>
</dbReference>
<dbReference type="Pfam" id="PF24844">
    <property type="entry name" value="PolC_DP2_central"/>
    <property type="match status" value="1"/>
</dbReference>
<dbReference type="Pfam" id="PF03833">
    <property type="entry name" value="PolC_DP2_N"/>
    <property type="match status" value="1"/>
</dbReference>
<dbReference type="PIRSF" id="PIRSF016275">
    <property type="entry name" value="PolC_DP2"/>
    <property type="match status" value="1"/>
</dbReference>